<reference key="1">
    <citation type="journal article" date="2011" name="Stand. Genomic Sci.">
        <title>Complete genome sequence of Parvibaculum lavamentivorans type strain (DS-1(T)).</title>
        <authorList>
            <person name="Schleheck D."/>
            <person name="Weiss M."/>
            <person name="Pitluck S."/>
            <person name="Bruce D."/>
            <person name="Land M.L."/>
            <person name="Han S."/>
            <person name="Saunders E."/>
            <person name="Tapia R."/>
            <person name="Detter C."/>
            <person name="Brettin T."/>
            <person name="Han J."/>
            <person name="Woyke T."/>
            <person name="Goodwin L."/>
            <person name="Pennacchio L."/>
            <person name="Nolan M."/>
            <person name="Cook A.M."/>
            <person name="Kjelleberg S."/>
            <person name="Thomas T."/>
        </authorList>
    </citation>
    <scope>NUCLEOTIDE SEQUENCE [LARGE SCALE GENOMIC DNA]</scope>
    <source>
        <strain>DS-1 / DSM 13023 / NCIMB 13966</strain>
    </source>
</reference>
<protein>
    <recommendedName>
        <fullName evidence="1">Large ribosomal subunit protein uL4</fullName>
    </recommendedName>
    <alternativeName>
        <fullName evidence="3">50S ribosomal protein L4</fullName>
    </alternativeName>
</protein>
<sequence length="206" mass="22300">MKIDVTTLEAKKAGSVDLTDGVFALEPRGDILHRMVAWQLAKRQAGTHKTKGRSEIALTGKKFVKQKGSGGARHGDRKAPQFRGGGKAFGPVVRSHAFDMPKKVRALALKLALSAKAKSDNLVILDEAKLAEPRTKAAKDAFEKLGLKSVLIIDGAELDANFALAARNLPNVDVLPVQGINVYDILRREKLVLTKAAVESLEARFK</sequence>
<name>RL4_PARL1</name>
<proteinExistence type="inferred from homology"/>
<comment type="function">
    <text evidence="1">One of the primary rRNA binding proteins, this protein initially binds near the 5'-end of the 23S rRNA. It is important during the early stages of 50S assembly. It makes multiple contacts with different domains of the 23S rRNA in the assembled 50S subunit and ribosome.</text>
</comment>
<comment type="function">
    <text evidence="1">Forms part of the polypeptide exit tunnel.</text>
</comment>
<comment type="subunit">
    <text evidence="1">Part of the 50S ribosomal subunit.</text>
</comment>
<comment type="similarity">
    <text evidence="1">Belongs to the universal ribosomal protein uL4 family.</text>
</comment>
<accession>A7HWR2</accession>
<feature type="chain" id="PRO_1000073271" description="Large ribosomal subunit protein uL4">
    <location>
        <begin position="1"/>
        <end position="206"/>
    </location>
</feature>
<feature type="region of interest" description="Disordered" evidence="2">
    <location>
        <begin position="65"/>
        <end position="85"/>
    </location>
</feature>
<gene>
    <name evidence="1" type="primary">rplD</name>
    <name type="ordered locus">Plav_2737</name>
</gene>
<dbReference type="EMBL" id="CP000774">
    <property type="protein sequence ID" value="ABS64345.1"/>
    <property type="molecule type" value="Genomic_DNA"/>
</dbReference>
<dbReference type="RefSeq" id="WP_012111659.1">
    <property type="nucleotide sequence ID" value="NC_009719.1"/>
</dbReference>
<dbReference type="SMR" id="A7HWR2"/>
<dbReference type="STRING" id="402881.Plav_2737"/>
<dbReference type="KEGG" id="pla:Plav_2737"/>
<dbReference type="eggNOG" id="COG0088">
    <property type="taxonomic scope" value="Bacteria"/>
</dbReference>
<dbReference type="HOGENOM" id="CLU_041575_5_1_5"/>
<dbReference type="OrthoDB" id="9803201at2"/>
<dbReference type="Proteomes" id="UP000006377">
    <property type="component" value="Chromosome"/>
</dbReference>
<dbReference type="GO" id="GO:1990904">
    <property type="term" value="C:ribonucleoprotein complex"/>
    <property type="evidence" value="ECO:0007669"/>
    <property type="project" value="UniProtKB-KW"/>
</dbReference>
<dbReference type="GO" id="GO:0005840">
    <property type="term" value="C:ribosome"/>
    <property type="evidence" value="ECO:0007669"/>
    <property type="project" value="UniProtKB-KW"/>
</dbReference>
<dbReference type="GO" id="GO:0019843">
    <property type="term" value="F:rRNA binding"/>
    <property type="evidence" value="ECO:0007669"/>
    <property type="project" value="UniProtKB-UniRule"/>
</dbReference>
<dbReference type="GO" id="GO:0003735">
    <property type="term" value="F:structural constituent of ribosome"/>
    <property type="evidence" value="ECO:0007669"/>
    <property type="project" value="InterPro"/>
</dbReference>
<dbReference type="GO" id="GO:0006412">
    <property type="term" value="P:translation"/>
    <property type="evidence" value="ECO:0007669"/>
    <property type="project" value="UniProtKB-UniRule"/>
</dbReference>
<dbReference type="Gene3D" id="3.40.1370.10">
    <property type="match status" value="1"/>
</dbReference>
<dbReference type="HAMAP" id="MF_01328_B">
    <property type="entry name" value="Ribosomal_uL4_B"/>
    <property type="match status" value="1"/>
</dbReference>
<dbReference type="InterPro" id="IPR002136">
    <property type="entry name" value="Ribosomal_uL4"/>
</dbReference>
<dbReference type="InterPro" id="IPR013005">
    <property type="entry name" value="Ribosomal_uL4-like"/>
</dbReference>
<dbReference type="InterPro" id="IPR023574">
    <property type="entry name" value="Ribosomal_uL4_dom_sf"/>
</dbReference>
<dbReference type="NCBIfam" id="TIGR03953">
    <property type="entry name" value="rplD_bact"/>
    <property type="match status" value="1"/>
</dbReference>
<dbReference type="PANTHER" id="PTHR10746">
    <property type="entry name" value="50S RIBOSOMAL PROTEIN L4"/>
    <property type="match status" value="1"/>
</dbReference>
<dbReference type="PANTHER" id="PTHR10746:SF6">
    <property type="entry name" value="LARGE RIBOSOMAL SUBUNIT PROTEIN UL4M"/>
    <property type="match status" value="1"/>
</dbReference>
<dbReference type="Pfam" id="PF00573">
    <property type="entry name" value="Ribosomal_L4"/>
    <property type="match status" value="1"/>
</dbReference>
<dbReference type="SUPFAM" id="SSF52166">
    <property type="entry name" value="Ribosomal protein L4"/>
    <property type="match status" value="1"/>
</dbReference>
<organism>
    <name type="scientific">Parvibaculum lavamentivorans (strain DS-1 / DSM 13023 / NCIMB 13966)</name>
    <dbReference type="NCBI Taxonomy" id="402881"/>
    <lineage>
        <taxon>Bacteria</taxon>
        <taxon>Pseudomonadati</taxon>
        <taxon>Pseudomonadota</taxon>
        <taxon>Alphaproteobacteria</taxon>
        <taxon>Hyphomicrobiales</taxon>
        <taxon>Parvibaculaceae</taxon>
        <taxon>Parvibaculum</taxon>
    </lineage>
</organism>
<evidence type="ECO:0000255" key="1">
    <source>
        <dbReference type="HAMAP-Rule" id="MF_01328"/>
    </source>
</evidence>
<evidence type="ECO:0000256" key="2">
    <source>
        <dbReference type="SAM" id="MobiDB-lite"/>
    </source>
</evidence>
<evidence type="ECO:0000305" key="3"/>
<keyword id="KW-1185">Reference proteome</keyword>
<keyword id="KW-0687">Ribonucleoprotein</keyword>
<keyword id="KW-0689">Ribosomal protein</keyword>
<keyword id="KW-0694">RNA-binding</keyword>
<keyword id="KW-0699">rRNA-binding</keyword>